<name>ACYP_CUPMC</name>
<sequence length="95" mass="10410">MTTTTETWQLFAHGRVQGVGYRAACADRATSLGLGGWVRNRVDGRVEVLASGPRERLEALRVWMEAGPPAAQVSKVEVAQAAPQLFDRFDWLPTA</sequence>
<protein>
    <recommendedName>
        <fullName>Acylphosphatase</fullName>
        <ecNumber>3.6.1.7</ecNumber>
    </recommendedName>
    <alternativeName>
        <fullName>Acylphosphate phosphohydrolase</fullName>
    </alternativeName>
</protein>
<keyword id="KW-0378">Hydrolase</keyword>
<keyword id="KW-1185">Reference proteome</keyword>
<proteinExistence type="inferred from homology"/>
<gene>
    <name type="primary">acyP</name>
    <name type="ordered locus">Rmet_3184</name>
</gene>
<evidence type="ECO:0000255" key="1">
    <source>
        <dbReference type="PROSITE-ProRule" id="PRU00520"/>
    </source>
</evidence>
<evidence type="ECO:0000305" key="2"/>
<accession>Q1LIH0</accession>
<organism>
    <name type="scientific">Cupriavidus metallidurans (strain ATCC 43123 / DSM 2839 / NBRC 102507 / CH34)</name>
    <name type="common">Ralstonia metallidurans</name>
    <dbReference type="NCBI Taxonomy" id="266264"/>
    <lineage>
        <taxon>Bacteria</taxon>
        <taxon>Pseudomonadati</taxon>
        <taxon>Pseudomonadota</taxon>
        <taxon>Betaproteobacteria</taxon>
        <taxon>Burkholderiales</taxon>
        <taxon>Burkholderiaceae</taxon>
        <taxon>Cupriavidus</taxon>
    </lineage>
</organism>
<feature type="chain" id="PRO_0000326776" description="Acylphosphatase">
    <location>
        <begin position="1"/>
        <end position="95"/>
    </location>
</feature>
<feature type="domain" description="Acylphosphatase-like" evidence="1">
    <location>
        <begin position="7"/>
        <end position="93"/>
    </location>
</feature>
<feature type="active site" evidence="1">
    <location>
        <position position="22"/>
    </location>
</feature>
<feature type="active site" evidence="1">
    <location>
        <position position="40"/>
    </location>
</feature>
<dbReference type="EC" id="3.6.1.7"/>
<dbReference type="EMBL" id="CP000352">
    <property type="protein sequence ID" value="ABF10056.1"/>
    <property type="molecule type" value="Genomic_DNA"/>
</dbReference>
<dbReference type="RefSeq" id="WP_011517665.1">
    <property type="nucleotide sequence ID" value="NC_007973.1"/>
</dbReference>
<dbReference type="SMR" id="Q1LIH0"/>
<dbReference type="STRING" id="266264.Rmet_3184"/>
<dbReference type="KEGG" id="rme:Rmet_3184"/>
<dbReference type="eggNOG" id="COG1254">
    <property type="taxonomic scope" value="Bacteria"/>
</dbReference>
<dbReference type="HOGENOM" id="CLU_141932_3_2_4"/>
<dbReference type="Proteomes" id="UP000002429">
    <property type="component" value="Chromosome"/>
</dbReference>
<dbReference type="GO" id="GO:0003998">
    <property type="term" value="F:acylphosphatase activity"/>
    <property type="evidence" value="ECO:0007669"/>
    <property type="project" value="UniProtKB-EC"/>
</dbReference>
<dbReference type="Gene3D" id="3.30.70.100">
    <property type="match status" value="1"/>
</dbReference>
<dbReference type="InterPro" id="IPR020456">
    <property type="entry name" value="Acylphosphatase"/>
</dbReference>
<dbReference type="InterPro" id="IPR001792">
    <property type="entry name" value="Acylphosphatase-like_dom"/>
</dbReference>
<dbReference type="InterPro" id="IPR036046">
    <property type="entry name" value="Acylphosphatase-like_dom_sf"/>
</dbReference>
<dbReference type="InterPro" id="IPR017968">
    <property type="entry name" value="Acylphosphatase_CS"/>
</dbReference>
<dbReference type="NCBIfam" id="NF011004">
    <property type="entry name" value="PRK14430.1"/>
    <property type="match status" value="1"/>
</dbReference>
<dbReference type="PANTHER" id="PTHR47268">
    <property type="entry name" value="ACYLPHOSPHATASE"/>
    <property type="match status" value="1"/>
</dbReference>
<dbReference type="PANTHER" id="PTHR47268:SF4">
    <property type="entry name" value="ACYLPHOSPHATASE"/>
    <property type="match status" value="1"/>
</dbReference>
<dbReference type="Pfam" id="PF00708">
    <property type="entry name" value="Acylphosphatase"/>
    <property type="match status" value="1"/>
</dbReference>
<dbReference type="SUPFAM" id="SSF54975">
    <property type="entry name" value="Acylphosphatase/BLUF domain-like"/>
    <property type="match status" value="1"/>
</dbReference>
<dbReference type="PROSITE" id="PS00151">
    <property type="entry name" value="ACYLPHOSPHATASE_2"/>
    <property type="match status" value="1"/>
</dbReference>
<dbReference type="PROSITE" id="PS51160">
    <property type="entry name" value="ACYLPHOSPHATASE_3"/>
    <property type="match status" value="1"/>
</dbReference>
<reference key="1">
    <citation type="journal article" date="2010" name="PLoS ONE">
        <title>The complete genome sequence of Cupriavidus metallidurans strain CH34, a master survivalist in harsh and anthropogenic environments.</title>
        <authorList>
            <person name="Janssen P.J."/>
            <person name="Van Houdt R."/>
            <person name="Moors H."/>
            <person name="Monsieurs P."/>
            <person name="Morin N."/>
            <person name="Michaux A."/>
            <person name="Benotmane M.A."/>
            <person name="Leys N."/>
            <person name="Vallaeys T."/>
            <person name="Lapidus A."/>
            <person name="Monchy S."/>
            <person name="Medigue C."/>
            <person name="Taghavi S."/>
            <person name="McCorkle S."/>
            <person name="Dunn J."/>
            <person name="van der Lelie D."/>
            <person name="Mergeay M."/>
        </authorList>
    </citation>
    <scope>NUCLEOTIDE SEQUENCE [LARGE SCALE GENOMIC DNA]</scope>
    <source>
        <strain>ATCC 43123 / DSM 2839 / NBRC 102507 / CH34</strain>
    </source>
</reference>
<comment type="catalytic activity">
    <reaction>
        <text>an acyl phosphate + H2O = a carboxylate + phosphate + H(+)</text>
        <dbReference type="Rhea" id="RHEA:14965"/>
        <dbReference type="ChEBI" id="CHEBI:15377"/>
        <dbReference type="ChEBI" id="CHEBI:15378"/>
        <dbReference type="ChEBI" id="CHEBI:29067"/>
        <dbReference type="ChEBI" id="CHEBI:43474"/>
        <dbReference type="ChEBI" id="CHEBI:59918"/>
        <dbReference type="EC" id="3.6.1.7"/>
    </reaction>
</comment>
<comment type="similarity">
    <text evidence="2">Belongs to the acylphosphatase family.</text>
</comment>